<reference key="1">
    <citation type="journal article" date="1997" name="Nature">
        <title>The complete genome sequence of the Gram-positive bacterium Bacillus subtilis.</title>
        <authorList>
            <person name="Kunst F."/>
            <person name="Ogasawara N."/>
            <person name="Moszer I."/>
            <person name="Albertini A.M."/>
            <person name="Alloni G."/>
            <person name="Azevedo V."/>
            <person name="Bertero M.G."/>
            <person name="Bessieres P."/>
            <person name="Bolotin A."/>
            <person name="Borchert S."/>
            <person name="Borriss R."/>
            <person name="Boursier L."/>
            <person name="Brans A."/>
            <person name="Braun M."/>
            <person name="Brignell S.C."/>
            <person name="Bron S."/>
            <person name="Brouillet S."/>
            <person name="Bruschi C.V."/>
            <person name="Caldwell B."/>
            <person name="Capuano V."/>
            <person name="Carter N.M."/>
            <person name="Choi S.-K."/>
            <person name="Codani J.-J."/>
            <person name="Connerton I.F."/>
            <person name="Cummings N.J."/>
            <person name="Daniel R.A."/>
            <person name="Denizot F."/>
            <person name="Devine K.M."/>
            <person name="Duesterhoeft A."/>
            <person name="Ehrlich S.D."/>
            <person name="Emmerson P.T."/>
            <person name="Entian K.-D."/>
            <person name="Errington J."/>
            <person name="Fabret C."/>
            <person name="Ferrari E."/>
            <person name="Foulger D."/>
            <person name="Fritz C."/>
            <person name="Fujita M."/>
            <person name="Fujita Y."/>
            <person name="Fuma S."/>
            <person name="Galizzi A."/>
            <person name="Galleron N."/>
            <person name="Ghim S.-Y."/>
            <person name="Glaser P."/>
            <person name="Goffeau A."/>
            <person name="Golightly E.J."/>
            <person name="Grandi G."/>
            <person name="Guiseppi G."/>
            <person name="Guy B.J."/>
            <person name="Haga K."/>
            <person name="Haiech J."/>
            <person name="Harwood C.R."/>
            <person name="Henaut A."/>
            <person name="Hilbert H."/>
            <person name="Holsappel S."/>
            <person name="Hosono S."/>
            <person name="Hullo M.-F."/>
            <person name="Itaya M."/>
            <person name="Jones L.-M."/>
            <person name="Joris B."/>
            <person name="Karamata D."/>
            <person name="Kasahara Y."/>
            <person name="Klaerr-Blanchard M."/>
            <person name="Klein C."/>
            <person name="Kobayashi Y."/>
            <person name="Koetter P."/>
            <person name="Koningstein G."/>
            <person name="Krogh S."/>
            <person name="Kumano M."/>
            <person name="Kurita K."/>
            <person name="Lapidus A."/>
            <person name="Lardinois S."/>
            <person name="Lauber J."/>
            <person name="Lazarevic V."/>
            <person name="Lee S.-M."/>
            <person name="Levine A."/>
            <person name="Liu H."/>
            <person name="Masuda S."/>
            <person name="Mauel C."/>
            <person name="Medigue C."/>
            <person name="Medina N."/>
            <person name="Mellado R.P."/>
            <person name="Mizuno M."/>
            <person name="Moestl D."/>
            <person name="Nakai S."/>
            <person name="Noback M."/>
            <person name="Noone D."/>
            <person name="O'Reilly M."/>
            <person name="Ogawa K."/>
            <person name="Ogiwara A."/>
            <person name="Oudega B."/>
            <person name="Park S.-H."/>
            <person name="Parro V."/>
            <person name="Pohl T.M."/>
            <person name="Portetelle D."/>
            <person name="Porwollik S."/>
            <person name="Prescott A.M."/>
            <person name="Presecan E."/>
            <person name="Pujic P."/>
            <person name="Purnelle B."/>
            <person name="Rapoport G."/>
            <person name="Rey M."/>
            <person name="Reynolds S."/>
            <person name="Rieger M."/>
            <person name="Rivolta C."/>
            <person name="Rocha E."/>
            <person name="Roche B."/>
            <person name="Rose M."/>
            <person name="Sadaie Y."/>
            <person name="Sato T."/>
            <person name="Scanlan E."/>
            <person name="Schleich S."/>
            <person name="Schroeter R."/>
            <person name="Scoffone F."/>
            <person name="Sekiguchi J."/>
            <person name="Sekowska A."/>
            <person name="Seror S.J."/>
            <person name="Serror P."/>
            <person name="Shin B.-S."/>
            <person name="Soldo B."/>
            <person name="Sorokin A."/>
            <person name="Tacconi E."/>
            <person name="Takagi T."/>
            <person name="Takahashi H."/>
            <person name="Takemaru K."/>
            <person name="Takeuchi M."/>
            <person name="Tamakoshi A."/>
            <person name="Tanaka T."/>
            <person name="Terpstra P."/>
            <person name="Tognoni A."/>
            <person name="Tosato V."/>
            <person name="Uchiyama S."/>
            <person name="Vandenbol M."/>
            <person name="Vannier F."/>
            <person name="Vassarotti A."/>
            <person name="Viari A."/>
            <person name="Wambutt R."/>
            <person name="Wedler E."/>
            <person name="Wedler H."/>
            <person name="Weitzenegger T."/>
            <person name="Winters P."/>
            <person name="Wipat A."/>
            <person name="Yamamoto H."/>
            <person name="Yamane K."/>
            <person name="Yasumoto K."/>
            <person name="Yata K."/>
            <person name="Yoshida K."/>
            <person name="Yoshikawa H.-F."/>
            <person name="Zumstein E."/>
            <person name="Yoshikawa H."/>
            <person name="Danchin A."/>
        </authorList>
    </citation>
    <scope>NUCLEOTIDE SEQUENCE [LARGE SCALE GENOMIC DNA]</scope>
    <source>
        <strain>168</strain>
    </source>
</reference>
<sequence>MILKEIAVYEETLNKHLPNETRMVLHYKNVEATENEDKITVRISNDLLVYKWVELGGVSKGTYKMKMTSLEDETSEVNVKIERIQMNSDRDLAVEIEFNVLNPFQSVVGVPGIHSFSIKG</sequence>
<protein>
    <recommendedName>
        <fullName>SPbeta prophage-derived uncharacterized protein YosG</fullName>
    </recommendedName>
</protein>
<dbReference type="EMBL" id="AL009126">
    <property type="protein sequence ID" value="CAB13905.1"/>
    <property type="molecule type" value="Genomic_DNA"/>
</dbReference>
<dbReference type="RefSeq" id="NP_389895.1">
    <property type="nucleotide sequence ID" value="NC_000964.3"/>
</dbReference>
<dbReference type="RefSeq" id="WP_004399442.1">
    <property type="nucleotide sequence ID" value="NZ_OZ025638.1"/>
</dbReference>
<dbReference type="FunCoup" id="O31882">
    <property type="interactions" value="50"/>
</dbReference>
<dbReference type="STRING" id="224308.BSU20130"/>
<dbReference type="PaxDb" id="224308-BSU20130"/>
<dbReference type="EnsemblBacteria" id="CAB13905">
    <property type="protein sequence ID" value="CAB13905"/>
    <property type="gene ID" value="BSU_20130"/>
</dbReference>
<dbReference type="GeneID" id="939570"/>
<dbReference type="KEGG" id="bsu:BSU20130"/>
<dbReference type="PATRIC" id="fig|224308.179.peg.2203"/>
<dbReference type="InParanoid" id="O31882"/>
<dbReference type="OrthoDB" id="2899486at2"/>
<dbReference type="BioCyc" id="BSUB:BSU20130-MONOMER"/>
<dbReference type="Proteomes" id="UP000001570">
    <property type="component" value="Chromosome"/>
</dbReference>
<proteinExistence type="predicted"/>
<accession>O31882</accession>
<feature type="chain" id="PRO_0000360742" description="SPbeta prophage-derived uncharacterized protein YosG">
    <location>
        <begin position="1"/>
        <end position="120"/>
    </location>
</feature>
<keyword id="KW-1185">Reference proteome</keyword>
<organism>
    <name type="scientific">Bacillus subtilis (strain 168)</name>
    <dbReference type="NCBI Taxonomy" id="224308"/>
    <lineage>
        <taxon>Bacteria</taxon>
        <taxon>Bacillati</taxon>
        <taxon>Bacillota</taxon>
        <taxon>Bacilli</taxon>
        <taxon>Bacillales</taxon>
        <taxon>Bacillaceae</taxon>
        <taxon>Bacillus</taxon>
    </lineage>
</organism>
<gene>
    <name type="primary">yosG</name>
    <name type="ordered locus">BSU20130</name>
</gene>
<name>YOSG_BACSU</name>